<reference key="1">
    <citation type="journal article" date="2007" name="PLoS ONE">
        <title>Molecular correlates of host specialization in Staphylococcus aureus.</title>
        <authorList>
            <person name="Herron-Olson L."/>
            <person name="Fitzgerald J.R."/>
            <person name="Musser J.M."/>
            <person name="Kapur V."/>
        </authorList>
    </citation>
    <scope>NUCLEOTIDE SEQUENCE [LARGE SCALE GENOMIC DNA]</scope>
    <source>
        <strain>bovine RF122 / ET3-1</strain>
    </source>
</reference>
<dbReference type="EC" id="1.7.1.7" evidence="1"/>
<dbReference type="EMBL" id="AJ938182">
    <property type="protein sequence ID" value="CAI80884.1"/>
    <property type="molecule type" value="Genomic_DNA"/>
</dbReference>
<dbReference type="RefSeq" id="WP_000688119.1">
    <property type="nucleotide sequence ID" value="NC_007622.1"/>
</dbReference>
<dbReference type="SMR" id="Q2YXS9"/>
<dbReference type="KEGG" id="sab:SAB1195"/>
<dbReference type="HOGENOM" id="CLU_022552_5_0_9"/>
<dbReference type="GO" id="GO:0005829">
    <property type="term" value="C:cytosol"/>
    <property type="evidence" value="ECO:0007669"/>
    <property type="project" value="TreeGrafter"/>
</dbReference>
<dbReference type="GO" id="GO:1902560">
    <property type="term" value="C:GMP reductase complex"/>
    <property type="evidence" value="ECO:0007669"/>
    <property type="project" value="InterPro"/>
</dbReference>
<dbReference type="GO" id="GO:0003920">
    <property type="term" value="F:GMP reductase activity"/>
    <property type="evidence" value="ECO:0007669"/>
    <property type="project" value="UniProtKB-UniRule"/>
</dbReference>
<dbReference type="GO" id="GO:0006163">
    <property type="term" value="P:purine nucleotide metabolic process"/>
    <property type="evidence" value="ECO:0007669"/>
    <property type="project" value="UniProtKB-UniRule"/>
</dbReference>
<dbReference type="CDD" id="cd00381">
    <property type="entry name" value="IMPDH"/>
    <property type="match status" value="1"/>
</dbReference>
<dbReference type="FunFam" id="3.20.20.70:FF:000079">
    <property type="entry name" value="GMP reductase"/>
    <property type="match status" value="1"/>
</dbReference>
<dbReference type="Gene3D" id="3.20.20.70">
    <property type="entry name" value="Aldolase class I"/>
    <property type="match status" value="1"/>
</dbReference>
<dbReference type="HAMAP" id="MF_01511">
    <property type="entry name" value="GMP_reduct_type2"/>
    <property type="match status" value="1"/>
</dbReference>
<dbReference type="InterPro" id="IPR013785">
    <property type="entry name" value="Aldolase_TIM"/>
</dbReference>
<dbReference type="InterPro" id="IPR050139">
    <property type="entry name" value="GMP_reductase"/>
</dbReference>
<dbReference type="InterPro" id="IPR005994">
    <property type="entry name" value="GuaC_type_2"/>
</dbReference>
<dbReference type="InterPro" id="IPR015875">
    <property type="entry name" value="IMP_DH/GMP_Rdtase_CS"/>
</dbReference>
<dbReference type="InterPro" id="IPR001093">
    <property type="entry name" value="IMP_DH_GMPRt"/>
</dbReference>
<dbReference type="NCBIfam" id="TIGR01306">
    <property type="entry name" value="GMP_reduct_2"/>
    <property type="match status" value="1"/>
</dbReference>
<dbReference type="NCBIfam" id="NF003966">
    <property type="entry name" value="PRK05458.1"/>
    <property type="match status" value="1"/>
</dbReference>
<dbReference type="PANTHER" id="PTHR43170">
    <property type="entry name" value="GMP REDUCTASE"/>
    <property type="match status" value="1"/>
</dbReference>
<dbReference type="PANTHER" id="PTHR43170:SF5">
    <property type="entry name" value="GMP REDUCTASE"/>
    <property type="match status" value="1"/>
</dbReference>
<dbReference type="Pfam" id="PF00478">
    <property type="entry name" value="IMPDH"/>
    <property type="match status" value="1"/>
</dbReference>
<dbReference type="PIRSF" id="PIRSF036500">
    <property type="entry name" value="GMP_red_Firmic"/>
    <property type="match status" value="1"/>
</dbReference>
<dbReference type="SMART" id="SM01240">
    <property type="entry name" value="IMPDH"/>
    <property type="match status" value="1"/>
</dbReference>
<dbReference type="SUPFAM" id="SSF51412">
    <property type="entry name" value="Inosine monophosphate dehydrogenase (IMPDH)"/>
    <property type="match status" value="1"/>
</dbReference>
<dbReference type="PROSITE" id="PS00487">
    <property type="entry name" value="IMP_DH_GMP_RED"/>
    <property type="match status" value="1"/>
</dbReference>
<sequence>MKIFDYEDIQLIPNKCIVESRSECDTTIQFGPKKFKIPVVPANMQTVMNEKLAKWFAENDYFYIMHRFDEEARIPFIKHMQNSGLFASISVGVKKAEFDFIEKLAQEKLIPEYITIDIAHGHSDSVINMIKHIKTHIPDSFVIAGNVGTPEGVRELENAGADATKVGIGPGRVCITKIKTGFGTGGWQLAALNICSKAARKPLIADGGIRTHGDIAKSIRFGASMVMIGSLFAAHEESPGETVELDGKQYKEYFGSASEFQKGEHKNVEGKKMFVEHKGSLMDTLKEMQQDLQSSISYAGGKDLKSLRTVDYVIVRNSIFNGDRD</sequence>
<keyword id="KW-0521">NADP</keyword>
<keyword id="KW-0560">Oxidoreductase</keyword>
<feature type="chain" id="PRO_0000294284" description="GMP reductase">
    <location>
        <begin position="1"/>
        <end position="325"/>
    </location>
</feature>
<feature type="active site" description="Thioimidate intermediate" evidence="1">
    <location>
        <position position="174"/>
    </location>
</feature>
<feature type="binding site" evidence="1">
    <location>
        <begin position="203"/>
        <end position="226"/>
    </location>
    <ligand>
        <name>NADP(+)</name>
        <dbReference type="ChEBI" id="CHEBI:58349"/>
    </ligand>
</feature>
<proteinExistence type="inferred from homology"/>
<accession>Q2YXS9</accession>
<protein>
    <recommendedName>
        <fullName evidence="1">GMP reductase</fullName>
        <ecNumber evidence="1">1.7.1.7</ecNumber>
    </recommendedName>
    <alternativeName>
        <fullName evidence="1">Guanosine 5'-monophosphate oxidoreductase</fullName>
        <shortName evidence="1">Guanosine monophosphate reductase</shortName>
    </alternativeName>
</protein>
<evidence type="ECO:0000255" key="1">
    <source>
        <dbReference type="HAMAP-Rule" id="MF_01511"/>
    </source>
</evidence>
<comment type="function">
    <text evidence="1">Catalyzes the irreversible NADPH-dependent deamination of GMP to IMP. It functions in the conversion of nucleobase, nucleoside and nucleotide derivatives of G to A nucleotides, and in maintaining the intracellular balance of A and G nucleotides.</text>
</comment>
<comment type="catalytic activity">
    <reaction evidence="1">
        <text>IMP + NH4(+) + NADP(+) = GMP + NADPH + 2 H(+)</text>
        <dbReference type="Rhea" id="RHEA:17185"/>
        <dbReference type="ChEBI" id="CHEBI:15378"/>
        <dbReference type="ChEBI" id="CHEBI:28938"/>
        <dbReference type="ChEBI" id="CHEBI:57783"/>
        <dbReference type="ChEBI" id="CHEBI:58053"/>
        <dbReference type="ChEBI" id="CHEBI:58115"/>
        <dbReference type="ChEBI" id="CHEBI:58349"/>
        <dbReference type="EC" id="1.7.1.7"/>
    </reaction>
</comment>
<comment type="similarity">
    <text evidence="1">Belongs to the IMPDH/GMPR family. GuaC type 2 subfamily.</text>
</comment>
<gene>
    <name evidence="1" type="primary">guaC</name>
    <name type="ordered locus">SAB1195</name>
</gene>
<name>GUAC_STAAB</name>
<organism>
    <name type="scientific">Staphylococcus aureus (strain bovine RF122 / ET3-1)</name>
    <dbReference type="NCBI Taxonomy" id="273036"/>
    <lineage>
        <taxon>Bacteria</taxon>
        <taxon>Bacillati</taxon>
        <taxon>Bacillota</taxon>
        <taxon>Bacilli</taxon>
        <taxon>Bacillales</taxon>
        <taxon>Staphylococcaceae</taxon>
        <taxon>Staphylococcus</taxon>
    </lineage>
</organism>